<evidence type="ECO:0000255" key="1">
    <source>
        <dbReference type="HAMAP-Rule" id="MF_01342"/>
    </source>
</evidence>
<evidence type="ECO:0000305" key="2"/>
<name>RL16_LEGPC</name>
<organism>
    <name type="scientific">Legionella pneumophila (strain Corby)</name>
    <dbReference type="NCBI Taxonomy" id="400673"/>
    <lineage>
        <taxon>Bacteria</taxon>
        <taxon>Pseudomonadati</taxon>
        <taxon>Pseudomonadota</taxon>
        <taxon>Gammaproteobacteria</taxon>
        <taxon>Legionellales</taxon>
        <taxon>Legionellaceae</taxon>
        <taxon>Legionella</taxon>
    </lineage>
</organism>
<gene>
    <name evidence="1" type="primary">rplP</name>
    <name type="ordered locus">LPC_3006</name>
</gene>
<proteinExistence type="inferred from homology"/>
<protein>
    <recommendedName>
        <fullName evidence="1">Large ribosomal subunit protein uL16</fullName>
    </recommendedName>
    <alternativeName>
        <fullName evidence="2">50S ribosomal protein L16</fullName>
    </alternativeName>
</protein>
<accession>A5IHQ7</accession>
<comment type="function">
    <text evidence="1">Binds 23S rRNA and is also seen to make contacts with the A and possibly P site tRNAs.</text>
</comment>
<comment type="subunit">
    <text evidence="1">Part of the 50S ribosomal subunit.</text>
</comment>
<comment type="similarity">
    <text evidence="1">Belongs to the universal ribosomal protein uL16 family.</text>
</comment>
<sequence length="137" mass="15762">MLQPKRTKYRKQMKGRNRGLALRGSKISFGEFGLKAVERGRLTARQIEAARRAMTRHIKRGGKIWIRVFPDKPITQKPLEVRQGKGKGSVEYWVAQIQPGKVLFEMEGVSKELAMEAFDLAKAKLPFKVMFEERTVM</sequence>
<dbReference type="EMBL" id="CP000675">
    <property type="protein sequence ID" value="ABQ56907.1"/>
    <property type="molecule type" value="Genomic_DNA"/>
</dbReference>
<dbReference type="RefSeq" id="WP_010946085.1">
    <property type="nucleotide sequence ID" value="NZ_JAPMSS010000006.1"/>
</dbReference>
<dbReference type="SMR" id="A5IHQ7"/>
<dbReference type="GeneID" id="57034339"/>
<dbReference type="KEGG" id="lpc:LPC_3006"/>
<dbReference type="HOGENOM" id="CLU_078858_2_1_6"/>
<dbReference type="GO" id="GO:0022625">
    <property type="term" value="C:cytosolic large ribosomal subunit"/>
    <property type="evidence" value="ECO:0007669"/>
    <property type="project" value="TreeGrafter"/>
</dbReference>
<dbReference type="GO" id="GO:0019843">
    <property type="term" value="F:rRNA binding"/>
    <property type="evidence" value="ECO:0007669"/>
    <property type="project" value="UniProtKB-UniRule"/>
</dbReference>
<dbReference type="GO" id="GO:0003735">
    <property type="term" value="F:structural constituent of ribosome"/>
    <property type="evidence" value="ECO:0007669"/>
    <property type="project" value="InterPro"/>
</dbReference>
<dbReference type="GO" id="GO:0000049">
    <property type="term" value="F:tRNA binding"/>
    <property type="evidence" value="ECO:0007669"/>
    <property type="project" value="UniProtKB-KW"/>
</dbReference>
<dbReference type="GO" id="GO:0006412">
    <property type="term" value="P:translation"/>
    <property type="evidence" value="ECO:0007669"/>
    <property type="project" value="UniProtKB-UniRule"/>
</dbReference>
<dbReference type="CDD" id="cd01433">
    <property type="entry name" value="Ribosomal_L16_L10e"/>
    <property type="match status" value="1"/>
</dbReference>
<dbReference type="FunFam" id="3.90.1170.10:FF:000001">
    <property type="entry name" value="50S ribosomal protein L16"/>
    <property type="match status" value="1"/>
</dbReference>
<dbReference type="Gene3D" id="3.90.1170.10">
    <property type="entry name" value="Ribosomal protein L10e/L16"/>
    <property type="match status" value="1"/>
</dbReference>
<dbReference type="HAMAP" id="MF_01342">
    <property type="entry name" value="Ribosomal_uL16"/>
    <property type="match status" value="1"/>
</dbReference>
<dbReference type="InterPro" id="IPR047873">
    <property type="entry name" value="Ribosomal_uL16"/>
</dbReference>
<dbReference type="InterPro" id="IPR000114">
    <property type="entry name" value="Ribosomal_uL16_bact-type"/>
</dbReference>
<dbReference type="InterPro" id="IPR020798">
    <property type="entry name" value="Ribosomal_uL16_CS"/>
</dbReference>
<dbReference type="InterPro" id="IPR016180">
    <property type="entry name" value="Ribosomal_uL16_dom"/>
</dbReference>
<dbReference type="InterPro" id="IPR036920">
    <property type="entry name" value="Ribosomal_uL16_sf"/>
</dbReference>
<dbReference type="NCBIfam" id="TIGR01164">
    <property type="entry name" value="rplP_bact"/>
    <property type="match status" value="1"/>
</dbReference>
<dbReference type="PANTHER" id="PTHR12220">
    <property type="entry name" value="50S/60S RIBOSOMAL PROTEIN L16"/>
    <property type="match status" value="1"/>
</dbReference>
<dbReference type="PANTHER" id="PTHR12220:SF13">
    <property type="entry name" value="LARGE RIBOSOMAL SUBUNIT PROTEIN UL16M"/>
    <property type="match status" value="1"/>
</dbReference>
<dbReference type="Pfam" id="PF00252">
    <property type="entry name" value="Ribosomal_L16"/>
    <property type="match status" value="1"/>
</dbReference>
<dbReference type="PRINTS" id="PR00060">
    <property type="entry name" value="RIBOSOMALL16"/>
</dbReference>
<dbReference type="SUPFAM" id="SSF54686">
    <property type="entry name" value="Ribosomal protein L16p/L10e"/>
    <property type="match status" value="1"/>
</dbReference>
<dbReference type="PROSITE" id="PS00586">
    <property type="entry name" value="RIBOSOMAL_L16_1"/>
    <property type="match status" value="1"/>
</dbReference>
<feature type="chain" id="PRO_1000054644" description="Large ribosomal subunit protein uL16">
    <location>
        <begin position="1"/>
        <end position="137"/>
    </location>
</feature>
<reference key="1">
    <citation type="submission" date="2006-11" db="EMBL/GenBank/DDBJ databases">
        <title>Identification and characterization of a new conjugation/ type IVA secretion system (trb/tra) of L. pneumophila Corby localized on a mobile genomic island.</title>
        <authorList>
            <person name="Gloeckner G."/>
            <person name="Albert-Weissenberger C."/>
            <person name="Weinmann E."/>
            <person name="Jacobi S."/>
            <person name="Schunder E."/>
            <person name="Steinert M."/>
            <person name="Buchrieser C."/>
            <person name="Hacker J."/>
            <person name="Heuner K."/>
        </authorList>
    </citation>
    <scope>NUCLEOTIDE SEQUENCE [LARGE SCALE GENOMIC DNA]</scope>
    <source>
        <strain>Corby</strain>
    </source>
</reference>
<keyword id="KW-0687">Ribonucleoprotein</keyword>
<keyword id="KW-0689">Ribosomal protein</keyword>
<keyword id="KW-0694">RNA-binding</keyword>
<keyword id="KW-0699">rRNA-binding</keyword>
<keyword id="KW-0820">tRNA-binding</keyword>